<dbReference type="EC" id="2.4.2.7" evidence="1"/>
<dbReference type="EMBL" id="CP000720">
    <property type="protein sequence ID" value="ABS48477.1"/>
    <property type="molecule type" value="Genomic_DNA"/>
</dbReference>
<dbReference type="RefSeq" id="WP_012105567.1">
    <property type="nucleotide sequence ID" value="NC_009708.1"/>
</dbReference>
<dbReference type="SMR" id="A7FL92"/>
<dbReference type="GeneID" id="49786953"/>
<dbReference type="KEGG" id="ypi:YpsIP31758_3060"/>
<dbReference type="HOGENOM" id="CLU_063339_3_0_6"/>
<dbReference type="UniPathway" id="UPA00588">
    <property type="reaction ID" value="UER00646"/>
</dbReference>
<dbReference type="Proteomes" id="UP000002412">
    <property type="component" value="Chromosome"/>
</dbReference>
<dbReference type="GO" id="GO:0005829">
    <property type="term" value="C:cytosol"/>
    <property type="evidence" value="ECO:0007669"/>
    <property type="project" value="TreeGrafter"/>
</dbReference>
<dbReference type="GO" id="GO:0003999">
    <property type="term" value="F:adenine phosphoribosyltransferase activity"/>
    <property type="evidence" value="ECO:0007669"/>
    <property type="project" value="UniProtKB-UniRule"/>
</dbReference>
<dbReference type="GO" id="GO:0006168">
    <property type="term" value="P:adenine salvage"/>
    <property type="evidence" value="ECO:0007669"/>
    <property type="project" value="InterPro"/>
</dbReference>
<dbReference type="GO" id="GO:0044209">
    <property type="term" value="P:AMP salvage"/>
    <property type="evidence" value="ECO:0007669"/>
    <property type="project" value="UniProtKB-UniRule"/>
</dbReference>
<dbReference type="GO" id="GO:0006166">
    <property type="term" value="P:purine ribonucleoside salvage"/>
    <property type="evidence" value="ECO:0007669"/>
    <property type="project" value="UniProtKB-KW"/>
</dbReference>
<dbReference type="CDD" id="cd06223">
    <property type="entry name" value="PRTases_typeI"/>
    <property type="match status" value="1"/>
</dbReference>
<dbReference type="FunFam" id="3.40.50.2020:FF:000004">
    <property type="entry name" value="Adenine phosphoribosyltransferase"/>
    <property type="match status" value="1"/>
</dbReference>
<dbReference type="Gene3D" id="3.40.50.2020">
    <property type="match status" value="1"/>
</dbReference>
<dbReference type="HAMAP" id="MF_00004">
    <property type="entry name" value="Aden_phosphoribosyltr"/>
    <property type="match status" value="1"/>
</dbReference>
<dbReference type="InterPro" id="IPR005764">
    <property type="entry name" value="Ade_phspho_trans"/>
</dbReference>
<dbReference type="InterPro" id="IPR050120">
    <property type="entry name" value="Adenine_PRTase"/>
</dbReference>
<dbReference type="InterPro" id="IPR000836">
    <property type="entry name" value="PRibTrfase_dom"/>
</dbReference>
<dbReference type="InterPro" id="IPR029057">
    <property type="entry name" value="PRTase-like"/>
</dbReference>
<dbReference type="NCBIfam" id="TIGR01090">
    <property type="entry name" value="apt"/>
    <property type="match status" value="1"/>
</dbReference>
<dbReference type="NCBIfam" id="NF002632">
    <property type="entry name" value="PRK02304.1-1"/>
    <property type="match status" value="1"/>
</dbReference>
<dbReference type="NCBIfam" id="NF002633">
    <property type="entry name" value="PRK02304.1-2"/>
    <property type="match status" value="1"/>
</dbReference>
<dbReference type="NCBIfam" id="NF002634">
    <property type="entry name" value="PRK02304.1-3"/>
    <property type="match status" value="1"/>
</dbReference>
<dbReference type="NCBIfam" id="NF002636">
    <property type="entry name" value="PRK02304.1-5"/>
    <property type="match status" value="1"/>
</dbReference>
<dbReference type="PANTHER" id="PTHR11776">
    <property type="entry name" value="ADENINE PHOSPHORIBOSYLTRANSFERASE"/>
    <property type="match status" value="1"/>
</dbReference>
<dbReference type="PANTHER" id="PTHR11776:SF7">
    <property type="entry name" value="PHOSPHORIBOSYLTRANSFERASE DOMAIN-CONTAINING PROTEIN"/>
    <property type="match status" value="1"/>
</dbReference>
<dbReference type="Pfam" id="PF00156">
    <property type="entry name" value="Pribosyltran"/>
    <property type="match status" value="1"/>
</dbReference>
<dbReference type="SUPFAM" id="SSF53271">
    <property type="entry name" value="PRTase-like"/>
    <property type="match status" value="1"/>
</dbReference>
<dbReference type="PROSITE" id="PS00103">
    <property type="entry name" value="PUR_PYR_PR_TRANSFER"/>
    <property type="match status" value="1"/>
</dbReference>
<name>APT_YERP3</name>
<reference key="1">
    <citation type="journal article" date="2007" name="PLoS Genet.">
        <title>The complete genome sequence of Yersinia pseudotuberculosis IP31758, the causative agent of Far East scarlet-like fever.</title>
        <authorList>
            <person name="Eppinger M."/>
            <person name="Rosovitz M.J."/>
            <person name="Fricke W.F."/>
            <person name="Rasko D.A."/>
            <person name="Kokorina G."/>
            <person name="Fayolle C."/>
            <person name="Lindler L.E."/>
            <person name="Carniel E."/>
            <person name="Ravel J."/>
        </authorList>
    </citation>
    <scope>NUCLEOTIDE SEQUENCE [LARGE SCALE GENOMIC DNA]</scope>
    <source>
        <strain>IP 31758</strain>
    </source>
</reference>
<protein>
    <recommendedName>
        <fullName evidence="1">Adenine phosphoribosyltransferase</fullName>
        <shortName evidence="1">APRT</shortName>
        <ecNumber evidence="1">2.4.2.7</ecNumber>
    </recommendedName>
</protein>
<proteinExistence type="inferred from homology"/>
<feature type="chain" id="PRO_1000057036" description="Adenine phosphoribosyltransferase">
    <location>
        <begin position="1"/>
        <end position="187"/>
    </location>
</feature>
<comment type="function">
    <text evidence="1">Catalyzes a salvage reaction resulting in the formation of AMP, that is energically less costly than de novo synthesis.</text>
</comment>
<comment type="catalytic activity">
    <reaction evidence="1">
        <text>AMP + diphosphate = 5-phospho-alpha-D-ribose 1-diphosphate + adenine</text>
        <dbReference type="Rhea" id="RHEA:16609"/>
        <dbReference type="ChEBI" id="CHEBI:16708"/>
        <dbReference type="ChEBI" id="CHEBI:33019"/>
        <dbReference type="ChEBI" id="CHEBI:58017"/>
        <dbReference type="ChEBI" id="CHEBI:456215"/>
        <dbReference type="EC" id="2.4.2.7"/>
    </reaction>
</comment>
<comment type="pathway">
    <text evidence="1">Purine metabolism; AMP biosynthesis via salvage pathway; AMP from adenine: step 1/1.</text>
</comment>
<comment type="subunit">
    <text evidence="1">Homodimer.</text>
</comment>
<comment type="subcellular location">
    <subcellularLocation>
        <location evidence="1">Cytoplasm</location>
    </subcellularLocation>
</comment>
<comment type="similarity">
    <text evidence="1">Belongs to the purine/pyrimidine phosphoribosyltransferase family.</text>
</comment>
<accession>A7FL92</accession>
<organism>
    <name type="scientific">Yersinia pseudotuberculosis serotype O:1b (strain IP 31758)</name>
    <dbReference type="NCBI Taxonomy" id="349747"/>
    <lineage>
        <taxon>Bacteria</taxon>
        <taxon>Pseudomonadati</taxon>
        <taxon>Pseudomonadota</taxon>
        <taxon>Gammaproteobacteria</taxon>
        <taxon>Enterobacterales</taxon>
        <taxon>Yersiniaceae</taxon>
        <taxon>Yersinia</taxon>
    </lineage>
</organism>
<sequence length="187" mass="20115">MTASASKTAQQLKYIKDSIKTIPDYPKAGILFRDVTSLLENPKAYSASIELLSEHYSESGVTKVVGTEARGFLFGAPVALALGVGFVPVRKPGKLPRETISESYELEYGTDTLEIHTDSIQPGDKVLVVDDLLATGGTIEATVKLIRRLGGEVVHAAFIINLPELGGEARLTQQGIHCYSLVSFDGH</sequence>
<keyword id="KW-0963">Cytoplasm</keyword>
<keyword id="KW-0328">Glycosyltransferase</keyword>
<keyword id="KW-0660">Purine salvage</keyword>
<keyword id="KW-0808">Transferase</keyword>
<gene>
    <name evidence="1" type="primary">apt</name>
    <name type="ordered locus">YpsIP31758_3060</name>
</gene>
<evidence type="ECO:0000255" key="1">
    <source>
        <dbReference type="HAMAP-Rule" id="MF_00004"/>
    </source>
</evidence>